<sequence>MAALDGLPPLRDVIQRHGLDAKKALGQNFLLDLNLTQKIARTAGPLEDVTVIEVGPGPGGLTRAILALGAKKVVAIERDSRCLPALAEIGAHYPGRLDIIEDDALKVDFEALADGPVRIIANLPYNVGTQLLVNWLLPGLWPPFWQSMTLMFQREVGLRIVAGADDDHYGRLGVLCGWRTKARLAFDVPPQAFTPPPKVTSTVVHLEPVEAPIPCSPAVLEKVTQAAFGQRRKMLRQSLKPLGGEALLAKAGIDPQRRAETLTVEEFCRLANCL</sequence>
<reference key="1">
    <citation type="journal article" date="2001" name="Proc. Natl. Acad. Sci. U.S.A.">
        <title>Analysis of the chromosome sequence of the legume symbiont Sinorhizobium meliloti strain 1021.</title>
        <authorList>
            <person name="Capela D."/>
            <person name="Barloy-Hubler F."/>
            <person name="Gouzy J."/>
            <person name="Bothe G."/>
            <person name="Ampe F."/>
            <person name="Batut J."/>
            <person name="Boistard P."/>
            <person name="Becker A."/>
            <person name="Boutry M."/>
            <person name="Cadieu E."/>
            <person name="Dreano S."/>
            <person name="Gloux S."/>
            <person name="Godrie T."/>
            <person name="Goffeau A."/>
            <person name="Kahn D."/>
            <person name="Kiss E."/>
            <person name="Lelaure V."/>
            <person name="Masuy D."/>
            <person name="Pohl T."/>
            <person name="Portetelle D."/>
            <person name="Puehler A."/>
            <person name="Purnelle B."/>
            <person name="Ramsperger U."/>
            <person name="Renard C."/>
            <person name="Thebault P."/>
            <person name="Vandenbol M."/>
            <person name="Weidner S."/>
            <person name="Galibert F."/>
        </authorList>
    </citation>
    <scope>NUCLEOTIDE SEQUENCE [LARGE SCALE GENOMIC DNA]</scope>
    <source>
        <strain>1021</strain>
    </source>
</reference>
<reference key="2">
    <citation type="journal article" date="2001" name="Science">
        <title>The composite genome of the legume symbiont Sinorhizobium meliloti.</title>
        <authorList>
            <person name="Galibert F."/>
            <person name="Finan T.M."/>
            <person name="Long S.R."/>
            <person name="Puehler A."/>
            <person name="Abola P."/>
            <person name="Ampe F."/>
            <person name="Barloy-Hubler F."/>
            <person name="Barnett M.J."/>
            <person name="Becker A."/>
            <person name="Boistard P."/>
            <person name="Bothe G."/>
            <person name="Boutry M."/>
            <person name="Bowser L."/>
            <person name="Buhrmester J."/>
            <person name="Cadieu E."/>
            <person name="Capela D."/>
            <person name="Chain P."/>
            <person name="Cowie A."/>
            <person name="Davis R.W."/>
            <person name="Dreano S."/>
            <person name="Federspiel N.A."/>
            <person name="Fisher R.F."/>
            <person name="Gloux S."/>
            <person name="Godrie T."/>
            <person name="Goffeau A."/>
            <person name="Golding B."/>
            <person name="Gouzy J."/>
            <person name="Gurjal M."/>
            <person name="Hernandez-Lucas I."/>
            <person name="Hong A."/>
            <person name="Huizar L."/>
            <person name="Hyman R.W."/>
            <person name="Jones T."/>
            <person name="Kahn D."/>
            <person name="Kahn M.L."/>
            <person name="Kalman S."/>
            <person name="Keating D.H."/>
            <person name="Kiss E."/>
            <person name="Komp C."/>
            <person name="Lelaure V."/>
            <person name="Masuy D."/>
            <person name="Palm C."/>
            <person name="Peck M.C."/>
            <person name="Pohl T.M."/>
            <person name="Portetelle D."/>
            <person name="Purnelle B."/>
            <person name="Ramsperger U."/>
            <person name="Surzycki R."/>
            <person name="Thebault P."/>
            <person name="Vandenbol M."/>
            <person name="Vorhoelter F.J."/>
            <person name="Weidner S."/>
            <person name="Wells D.H."/>
            <person name="Wong K."/>
            <person name="Yeh K.-C."/>
            <person name="Batut J."/>
        </authorList>
    </citation>
    <scope>NUCLEOTIDE SEQUENCE [LARGE SCALE GENOMIC DNA]</scope>
    <source>
        <strain>1021</strain>
    </source>
</reference>
<accession>Q92QZ1</accession>
<dbReference type="EC" id="2.1.1.182" evidence="1"/>
<dbReference type="EMBL" id="AL591688">
    <property type="protein sequence ID" value="CAC45728.1"/>
    <property type="molecule type" value="Genomic_DNA"/>
</dbReference>
<dbReference type="RefSeq" id="NP_385255.1">
    <property type="nucleotide sequence ID" value="NC_003047.1"/>
</dbReference>
<dbReference type="RefSeq" id="WP_010969072.1">
    <property type="nucleotide sequence ID" value="NC_003047.1"/>
</dbReference>
<dbReference type="SMR" id="Q92QZ1"/>
<dbReference type="EnsemblBacteria" id="CAC45728">
    <property type="protein sequence ID" value="CAC45728"/>
    <property type="gene ID" value="SMc00579"/>
</dbReference>
<dbReference type="KEGG" id="sme:SMc00579"/>
<dbReference type="PATRIC" id="fig|266834.11.peg.2558"/>
<dbReference type="eggNOG" id="COG0030">
    <property type="taxonomic scope" value="Bacteria"/>
</dbReference>
<dbReference type="HOGENOM" id="CLU_041220_0_1_5"/>
<dbReference type="OrthoDB" id="9814755at2"/>
<dbReference type="Proteomes" id="UP000001976">
    <property type="component" value="Chromosome"/>
</dbReference>
<dbReference type="GO" id="GO:0005829">
    <property type="term" value="C:cytosol"/>
    <property type="evidence" value="ECO:0007669"/>
    <property type="project" value="TreeGrafter"/>
</dbReference>
<dbReference type="GO" id="GO:0052908">
    <property type="term" value="F:16S rRNA (adenine(1518)-N(6)/adenine(1519)-N(6))-dimethyltransferase activity"/>
    <property type="evidence" value="ECO:0007669"/>
    <property type="project" value="UniProtKB-EC"/>
</dbReference>
<dbReference type="GO" id="GO:0003723">
    <property type="term" value="F:RNA binding"/>
    <property type="evidence" value="ECO:0007669"/>
    <property type="project" value="UniProtKB-KW"/>
</dbReference>
<dbReference type="CDD" id="cd02440">
    <property type="entry name" value="AdoMet_MTases"/>
    <property type="match status" value="1"/>
</dbReference>
<dbReference type="FunFam" id="1.10.8.100:FF:000001">
    <property type="entry name" value="Ribosomal RNA small subunit methyltransferase A"/>
    <property type="match status" value="1"/>
</dbReference>
<dbReference type="Gene3D" id="1.10.8.100">
    <property type="entry name" value="Ribosomal RNA adenine dimethylase-like, domain 2"/>
    <property type="match status" value="1"/>
</dbReference>
<dbReference type="Gene3D" id="3.40.50.150">
    <property type="entry name" value="Vaccinia Virus protein VP39"/>
    <property type="match status" value="1"/>
</dbReference>
<dbReference type="HAMAP" id="MF_00607">
    <property type="entry name" value="16SrRNA_methyltr_A"/>
    <property type="match status" value="1"/>
</dbReference>
<dbReference type="InterPro" id="IPR001737">
    <property type="entry name" value="KsgA/Erm"/>
</dbReference>
<dbReference type="InterPro" id="IPR023165">
    <property type="entry name" value="rRNA_Ade_diMease-like_C"/>
</dbReference>
<dbReference type="InterPro" id="IPR020596">
    <property type="entry name" value="rRNA_Ade_Mease_Trfase_CS"/>
</dbReference>
<dbReference type="InterPro" id="IPR020598">
    <property type="entry name" value="rRNA_Ade_methylase_Trfase_N"/>
</dbReference>
<dbReference type="InterPro" id="IPR011530">
    <property type="entry name" value="rRNA_adenine_dimethylase"/>
</dbReference>
<dbReference type="InterPro" id="IPR029063">
    <property type="entry name" value="SAM-dependent_MTases_sf"/>
</dbReference>
<dbReference type="NCBIfam" id="TIGR00755">
    <property type="entry name" value="ksgA"/>
    <property type="match status" value="1"/>
</dbReference>
<dbReference type="PANTHER" id="PTHR11727">
    <property type="entry name" value="DIMETHYLADENOSINE TRANSFERASE"/>
    <property type="match status" value="1"/>
</dbReference>
<dbReference type="PANTHER" id="PTHR11727:SF7">
    <property type="entry name" value="DIMETHYLADENOSINE TRANSFERASE-RELATED"/>
    <property type="match status" value="1"/>
</dbReference>
<dbReference type="Pfam" id="PF00398">
    <property type="entry name" value="RrnaAD"/>
    <property type="match status" value="1"/>
</dbReference>
<dbReference type="SMART" id="SM00650">
    <property type="entry name" value="rADc"/>
    <property type="match status" value="1"/>
</dbReference>
<dbReference type="SUPFAM" id="SSF53335">
    <property type="entry name" value="S-adenosyl-L-methionine-dependent methyltransferases"/>
    <property type="match status" value="1"/>
</dbReference>
<dbReference type="PROSITE" id="PS01131">
    <property type="entry name" value="RRNA_A_DIMETH"/>
    <property type="match status" value="1"/>
</dbReference>
<dbReference type="PROSITE" id="PS51689">
    <property type="entry name" value="SAM_RNA_A_N6_MT"/>
    <property type="match status" value="1"/>
</dbReference>
<keyword id="KW-0963">Cytoplasm</keyword>
<keyword id="KW-0489">Methyltransferase</keyword>
<keyword id="KW-1185">Reference proteome</keyword>
<keyword id="KW-0694">RNA-binding</keyword>
<keyword id="KW-0698">rRNA processing</keyword>
<keyword id="KW-0949">S-adenosyl-L-methionine</keyword>
<keyword id="KW-0808">Transferase</keyword>
<comment type="function">
    <text evidence="1">Specifically dimethylates two adjacent adenosines (A1518 and A1519) in the loop of a conserved hairpin near the 3'-end of 16S rRNA in the 30S particle. May play a critical role in biogenesis of 30S subunits.</text>
</comment>
<comment type="catalytic activity">
    <reaction evidence="1">
        <text>adenosine(1518)/adenosine(1519) in 16S rRNA + 4 S-adenosyl-L-methionine = N(6)-dimethyladenosine(1518)/N(6)-dimethyladenosine(1519) in 16S rRNA + 4 S-adenosyl-L-homocysteine + 4 H(+)</text>
        <dbReference type="Rhea" id="RHEA:19609"/>
        <dbReference type="Rhea" id="RHEA-COMP:10232"/>
        <dbReference type="Rhea" id="RHEA-COMP:10233"/>
        <dbReference type="ChEBI" id="CHEBI:15378"/>
        <dbReference type="ChEBI" id="CHEBI:57856"/>
        <dbReference type="ChEBI" id="CHEBI:59789"/>
        <dbReference type="ChEBI" id="CHEBI:74411"/>
        <dbReference type="ChEBI" id="CHEBI:74493"/>
        <dbReference type="EC" id="2.1.1.182"/>
    </reaction>
</comment>
<comment type="subcellular location">
    <subcellularLocation>
        <location evidence="1">Cytoplasm</location>
    </subcellularLocation>
</comment>
<comment type="similarity">
    <text evidence="1">Belongs to the class I-like SAM-binding methyltransferase superfamily. rRNA adenine N(6)-methyltransferase family. RsmA subfamily.</text>
</comment>
<evidence type="ECO:0000255" key="1">
    <source>
        <dbReference type="HAMAP-Rule" id="MF_00607"/>
    </source>
</evidence>
<proteinExistence type="inferred from homology"/>
<organism>
    <name type="scientific">Rhizobium meliloti (strain 1021)</name>
    <name type="common">Ensifer meliloti</name>
    <name type="synonym">Sinorhizobium meliloti</name>
    <dbReference type="NCBI Taxonomy" id="266834"/>
    <lineage>
        <taxon>Bacteria</taxon>
        <taxon>Pseudomonadati</taxon>
        <taxon>Pseudomonadota</taxon>
        <taxon>Alphaproteobacteria</taxon>
        <taxon>Hyphomicrobiales</taxon>
        <taxon>Rhizobiaceae</taxon>
        <taxon>Sinorhizobium/Ensifer group</taxon>
        <taxon>Sinorhizobium</taxon>
    </lineage>
</organism>
<gene>
    <name evidence="1" type="primary">rsmA</name>
    <name evidence="1" type="synonym">ksgA</name>
    <name type="ordered locus">R01149</name>
    <name type="ORF">SMc00579</name>
</gene>
<feature type="chain" id="PRO_0000101591" description="Ribosomal RNA small subunit methyltransferase A">
    <location>
        <begin position="1"/>
        <end position="274"/>
    </location>
</feature>
<feature type="binding site" evidence="1">
    <location>
        <position position="28"/>
    </location>
    <ligand>
        <name>S-adenosyl-L-methionine</name>
        <dbReference type="ChEBI" id="CHEBI:59789"/>
    </ligand>
</feature>
<feature type="binding site" evidence="1">
    <location>
        <position position="30"/>
    </location>
    <ligand>
        <name>S-adenosyl-L-methionine</name>
        <dbReference type="ChEBI" id="CHEBI:59789"/>
    </ligand>
</feature>
<feature type="binding site" evidence="1">
    <location>
        <position position="55"/>
    </location>
    <ligand>
        <name>S-adenosyl-L-methionine</name>
        <dbReference type="ChEBI" id="CHEBI:59789"/>
    </ligand>
</feature>
<feature type="binding site" evidence="1">
    <location>
        <position position="77"/>
    </location>
    <ligand>
        <name>S-adenosyl-L-methionine</name>
        <dbReference type="ChEBI" id="CHEBI:59789"/>
    </ligand>
</feature>
<feature type="binding site" evidence="1">
    <location>
        <position position="103"/>
    </location>
    <ligand>
        <name>S-adenosyl-L-methionine</name>
        <dbReference type="ChEBI" id="CHEBI:59789"/>
    </ligand>
</feature>
<feature type="binding site" evidence="1">
    <location>
        <position position="122"/>
    </location>
    <ligand>
        <name>S-adenosyl-L-methionine</name>
        <dbReference type="ChEBI" id="CHEBI:59789"/>
    </ligand>
</feature>
<protein>
    <recommendedName>
        <fullName evidence="1">Ribosomal RNA small subunit methyltransferase A</fullName>
        <ecNumber evidence="1">2.1.1.182</ecNumber>
    </recommendedName>
    <alternativeName>
        <fullName evidence="1">16S rRNA (adenine(1518)-N(6)/adenine(1519)-N(6))-dimethyltransferase</fullName>
    </alternativeName>
    <alternativeName>
        <fullName evidence="1">16S rRNA dimethyladenosine transferase</fullName>
    </alternativeName>
    <alternativeName>
        <fullName evidence="1">16S rRNA dimethylase</fullName>
    </alternativeName>
    <alternativeName>
        <fullName evidence="1">S-adenosylmethionine-6-N', N'-adenosyl(rRNA) dimethyltransferase</fullName>
    </alternativeName>
</protein>
<name>RSMA_RHIME</name>